<feature type="chain" id="PRO_0000107074" description="Dihydroneopterin 2',3'-cyclic phosphate phosphodiesterase">
    <location>
        <begin position="1"/>
        <end position="249"/>
    </location>
</feature>
<feature type="domain" description="HD" evidence="1">
    <location>
        <begin position="58"/>
        <end position="172"/>
    </location>
</feature>
<feature type="mutagenesis site" description="Large reduction in catalytic activity." evidence="2">
    <original>H</original>
    <variation>N</variation>
    <location>
        <position position="61"/>
    </location>
</feature>
<feature type="mutagenesis site" description="Slight reduction in catalytic activity with H2N-cP and 2',3'-cAMP as substrates, but 2-fold increase in activity with bis-pNPP." evidence="2">
    <original>H</original>
    <variation>N</variation>
    <location>
        <position position="96"/>
    </location>
</feature>
<feature type="mutagenesis site" description="Large reduction in catalytic activity." evidence="2">
    <original>D</original>
    <variation>N</variation>
    <location>
        <position position="167"/>
    </location>
</feature>
<keyword id="KW-0378">Hydrolase</keyword>
<keyword id="KW-0408">Iron</keyword>
<keyword id="KW-0479">Metal-binding</keyword>
<keyword id="KW-1185">Reference proteome</keyword>
<keyword id="KW-0862">Zinc</keyword>
<gene>
    <name type="primary">mptB</name>
    <name type="ordered locus">MJ0837</name>
</gene>
<organism>
    <name type="scientific">Methanocaldococcus jannaschii (strain ATCC 43067 / DSM 2661 / JAL-1 / JCM 10045 / NBRC 100440)</name>
    <name type="common">Methanococcus jannaschii</name>
    <dbReference type="NCBI Taxonomy" id="243232"/>
    <lineage>
        <taxon>Archaea</taxon>
        <taxon>Methanobacteriati</taxon>
        <taxon>Methanobacteriota</taxon>
        <taxon>Methanomada group</taxon>
        <taxon>Methanococci</taxon>
        <taxon>Methanococcales</taxon>
        <taxon>Methanocaldococcaceae</taxon>
        <taxon>Methanocaldococcus</taxon>
    </lineage>
</organism>
<dbReference type="EC" id="3.1.4.56"/>
<dbReference type="EMBL" id="L77117">
    <property type="protein sequence ID" value="AAB98842.1"/>
    <property type="molecule type" value="Genomic_DNA"/>
</dbReference>
<dbReference type="PIR" id="E64404">
    <property type="entry name" value="E64404"/>
</dbReference>
<dbReference type="RefSeq" id="WP_010870351.1">
    <property type="nucleotide sequence ID" value="NC_000909.1"/>
</dbReference>
<dbReference type="STRING" id="243232.MJ_0837"/>
<dbReference type="PaxDb" id="243232-MJ_0837"/>
<dbReference type="EnsemblBacteria" id="AAB98842">
    <property type="protein sequence ID" value="AAB98842"/>
    <property type="gene ID" value="MJ_0837"/>
</dbReference>
<dbReference type="GeneID" id="1451723"/>
<dbReference type="KEGG" id="mja:MJ_0837"/>
<dbReference type="eggNOG" id="arCOG01861">
    <property type="taxonomic scope" value="Archaea"/>
</dbReference>
<dbReference type="HOGENOM" id="CLU_1109506_0_0_2"/>
<dbReference type="InParanoid" id="Q58247"/>
<dbReference type="OrthoDB" id="114744at2157"/>
<dbReference type="PhylomeDB" id="Q58247"/>
<dbReference type="BioCyc" id="MetaCyc:MONOMER-16557"/>
<dbReference type="BRENDA" id="3.1.4.56">
    <property type="organism ID" value="3260"/>
</dbReference>
<dbReference type="UniPathway" id="UPA00065"/>
<dbReference type="Proteomes" id="UP000000805">
    <property type="component" value="Chromosome"/>
</dbReference>
<dbReference type="GO" id="GO:0044682">
    <property type="term" value="F:GTP cyclohydrolase IV activity"/>
    <property type="evidence" value="ECO:0000314"/>
    <property type="project" value="MENGO"/>
</dbReference>
<dbReference type="GO" id="GO:0046872">
    <property type="term" value="F:metal ion binding"/>
    <property type="evidence" value="ECO:0007669"/>
    <property type="project" value="UniProtKB-KW"/>
</dbReference>
<dbReference type="CDD" id="cd00077">
    <property type="entry name" value="HDc"/>
    <property type="match status" value="1"/>
</dbReference>
<dbReference type="Gene3D" id="1.10.3210.10">
    <property type="entry name" value="Hypothetical protein af1432"/>
    <property type="match status" value="1"/>
</dbReference>
<dbReference type="InterPro" id="IPR003607">
    <property type="entry name" value="HD/PDEase_dom"/>
</dbReference>
<dbReference type="InterPro" id="IPR006674">
    <property type="entry name" value="HD_domain"/>
</dbReference>
<dbReference type="InterPro" id="IPR006675">
    <property type="entry name" value="HDIG_dom"/>
</dbReference>
<dbReference type="InterPro" id="IPR050798">
    <property type="entry name" value="YhaM_exoribonuc/phosphodiest"/>
</dbReference>
<dbReference type="NCBIfam" id="TIGR00277">
    <property type="entry name" value="HDIG"/>
    <property type="match status" value="1"/>
</dbReference>
<dbReference type="PANTHER" id="PTHR37294">
    <property type="entry name" value="3'-5' EXORIBONUCLEASE YHAM"/>
    <property type="match status" value="1"/>
</dbReference>
<dbReference type="PANTHER" id="PTHR37294:SF1">
    <property type="entry name" value="3'-5' EXORIBONUCLEASE YHAM"/>
    <property type="match status" value="1"/>
</dbReference>
<dbReference type="Pfam" id="PF01966">
    <property type="entry name" value="HD"/>
    <property type="match status" value="1"/>
</dbReference>
<dbReference type="SMART" id="SM00471">
    <property type="entry name" value="HDc"/>
    <property type="match status" value="1"/>
</dbReference>
<dbReference type="SUPFAM" id="SSF109604">
    <property type="entry name" value="HD-domain/PDEase-like"/>
    <property type="match status" value="1"/>
</dbReference>
<dbReference type="PROSITE" id="PS51831">
    <property type="entry name" value="HD"/>
    <property type="match status" value="1"/>
</dbReference>
<proteinExistence type="evidence at protein level"/>
<protein>
    <recommendedName>
        <fullName>Dihydroneopterin 2',3'-cyclic phosphate phosphodiesterase</fullName>
        <shortName>H2N-cP phosphodiesterase</shortName>
        <shortName>H2Neo-cP phosphodiesterase</shortName>
        <ecNumber>3.1.4.56</ecNumber>
    </recommendedName>
    <alternativeName>
        <fullName>7,8-dihydro-D-neopterin 2',3'-cyclic phosphate phosphodiesterase</fullName>
    </alternativeName>
</protein>
<reference key="1">
    <citation type="journal article" date="1996" name="Science">
        <title>Complete genome sequence of the methanogenic archaeon, Methanococcus jannaschii.</title>
        <authorList>
            <person name="Bult C.J."/>
            <person name="White O."/>
            <person name="Olsen G.J."/>
            <person name="Zhou L."/>
            <person name="Fleischmann R.D."/>
            <person name="Sutton G.G."/>
            <person name="Blake J.A."/>
            <person name="FitzGerald L.M."/>
            <person name="Clayton R.A."/>
            <person name="Gocayne J.D."/>
            <person name="Kerlavage A.R."/>
            <person name="Dougherty B.A."/>
            <person name="Tomb J.-F."/>
            <person name="Adams M.D."/>
            <person name="Reich C.I."/>
            <person name="Overbeek R."/>
            <person name="Kirkness E.F."/>
            <person name="Weinstock K.G."/>
            <person name="Merrick J.M."/>
            <person name="Glodek A."/>
            <person name="Scott J.L."/>
            <person name="Geoghagen N.S.M."/>
            <person name="Weidman J.F."/>
            <person name="Fuhrmann J.L."/>
            <person name="Nguyen D."/>
            <person name="Utterback T.R."/>
            <person name="Kelley J.M."/>
            <person name="Peterson J.D."/>
            <person name="Sadow P.W."/>
            <person name="Hanna M.C."/>
            <person name="Cotton M.D."/>
            <person name="Roberts K.M."/>
            <person name="Hurst M.A."/>
            <person name="Kaine B.P."/>
            <person name="Borodovsky M."/>
            <person name="Klenk H.-P."/>
            <person name="Fraser C.M."/>
            <person name="Smith H.O."/>
            <person name="Woese C.R."/>
            <person name="Venter J.C."/>
        </authorList>
    </citation>
    <scope>NUCLEOTIDE SEQUENCE [LARGE SCALE GENOMIC DNA]</scope>
    <source>
        <strain>ATCC 43067 / DSM 2661 / JAL-1 / JCM 10045 / NBRC 100440</strain>
    </source>
</reference>
<reference key="2">
    <citation type="journal article" date="2009" name="Biochemistry">
        <title>An Fe2+-dependent cyclic phosphodiesterase catalyzes the hydrolysis of 7,8-dihydro-D-neopterin 2',3'-cyclic phosphate in methanopterin biosynthesis.</title>
        <authorList>
            <person name="Mashhadi Z."/>
            <person name="Xu H."/>
            <person name="White R.H."/>
        </authorList>
    </citation>
    <scope>FUNCTION</scope>
    <scope>CATALYTIC ACTIVITY</scope>
    <scope>COFACTOR</scope>
    <scope>SUBSTRATE SPECIFICITY</scope>
    <scope>GENE NAME</scope>
    <scope>PATHWAY</scope>
    <scope>PH DEPENDENCE</scope>
    <scope>SUBUNIT</scope>
    <scope>MUTAGENESIS OF HIS-61; HIS-96 AND ASP-167</scope>
</reference>
<comment type="function">
    <text evidence="2">Cyclic phosphodiesterase that hydrolyzes the cyclic phosphate of 7,8-dihydroneopterin 2',3'-cyclic phosphate (H2N-cP) and converts it to a mixture of 7,8-dihydroneopterin 2'-phosphate (H2N-2'P) and 7,8-dihydroneopterin 3'-phosphate (H2N-3'P). Is also able to utilize other phosphodiesters as substrates in vitro: hydrolysis of bis-pNPP and pNPPC produces nitrophenyl phosphate, and that of 2',3'-cAMP produces 3'-AMP. ATP, 3',5'-cAMP, GTP, 3',5'-cGMP, and 4',5'-cFMN cannot serve as substrates.</text>
</comment>
<comment type="catalytic activity">
    <reaction evidence="2">
        <text>7,8-dihydroneopterin 2',3'-cyclic phosphate + H2O = 7,8-dihydroneopterin 3'-phosphate + H(+)</text>
        <dbReference type="Rhea" id="RHEA:35799"/>
        <dbReference type="ChEBI" id="CHEBI:15377"/>
        <dbReference type="ChEBI" id="CHEBI:15378"/>
        <dbReference type="ChEBI" id="CHEBI:58762"/>
        <dbReference type="ChEBI" id="CHEBI:58854"/>
        <dbReference type="EC" id="3.1.4.56"/>
    </reaction>
</comment>
<comment type="catalytic activity">
    <reaction evidence="2">
        <text>7,8-dihydroneopterin 2',3'-cyclic phosphate + H2O = 7,8-dihydroneopterin 2'-phosphate + H(+)</text>
        <dbReference type="Rhea" id="RHEA:35803"/>
        <dbReference type="ChEBI" id="CHEBI:15377"/>
        <dbReference type="ChEBI" id="CHEBI:15378"/>
        <dbReference type="ChEBI" id="CHEBI:58854"/>
        <dbReference type="ChEBI" id="CHEBI:72777"/>
        <dbReference type="EC" id="3.1.4.56"/>
    </reaction>
</comment>
<comment type="cofactor">
    <cofactor evidence="2">
        <name>Fe(2+)</name>
        <dbReference type="ChEBI" id="CHEBI:29033"/>
    </cofactor>
    <text evidence="2">Binds 1 Fe(2+) ion per subunit. Since MptB requires Fe2(+) for activity, the Fe(2+) ion likely has a catalytic role. The enzyme is also active under high concentrations of Mn(2+) in vitro.</text>
</comment>
<comment type="cofactor">
    <cofactor evidence="2">
        <name>Zn(2+)</name>
        <dbReference type="ChEBI" id="CHEBI:29105"/>
    </cofactor>
    <text evidence="2">Binds 1 Zn(2+) ion per subunit. The Zn(2+) ion is proposed to have a structural role.</text>
</comment>
<comment type="biophysicochemical properties">
    <phDependence>
        <text evidence="2">Optimum pH is 7.5 with bis-pNPP as substrate.</text>
    </phDependence>
</comment>
<comment type="pathway">
    <text evidence="2">Cofactor biosynthesis; 5,6,7,8-tetrahydromethanopterin biosynthesis.</text>
</comment>
<comment type="subunit">
    <text evidence="2">Homododecamer.</text>
</comment>
<evidence type="ECO:0000255" key="1">
    <source>
        <dbReference type="PROSITE-ProRule" id="PRU01175"/>
    </source>
</evidence>
<evidence type="ECO:0000269" key="2">
    <source>
    </source>
</evidence>
<sequence length="249" mass="28523">MERLIKLAEQIKDEELRKKVIEFLKNPKATHPGIVDTGISVEEAPASINWHHRYEGGLIEHTISVTKIALKMADVLEEVYGVEVNRDYIIAGALLHDIMKPYNYIRKEDGTFDHYDMFNLDHLTLAVAELYKRDFPIEVIKIVASHHGDHSPTRPNSIEAYIVHYADEADSKINDVAVRVCQARSRDLGISEQEIYKAVNPLKVYEVRSREGKLKTIEFLKDILKSIGIISEDEKKDENNESLENKESN</sequence>
<name>MPTB_METJA</name>
<accession>Q58247</accession>